<sequence length="687" mass="74518">MMTQTLLIELLTEELPPKALNNLGNHFAAAVAEGLEKAQLVDGAAEFTAYASPRRLAVQVKNVKAVQADQKIVKKGPAVANAMKDGAPTKALEGFARGAGAKIEDLTIVHDGKQDVYAYEYVQTGKPLGELLEDIINAAVKKLPIPKVMRWGSSTFTFVRPVHGLVVLHGGDIVNVSVLGLQSSNQTLGHRFLSNGEITIENADSYAAQMREQGKVVASFAERKAAIQTALEGQARRLNASVAADEALLDEVTALVEWPVVLEAGFEEHFLAVPQECLILTMQQNQKYFPLLDQNGKLMNRFLLVSNLQTEDPSHIIRGNERVLRARLSDAEFFYKQDQKATLESRLPKLSSVVYHNKIGSQAERIERLQSIAAHIAKALGADAAAAERAARLAKADLVTEMVGEFPELQGTMGKYYARLDGETEEIAEAVEQHYQPRFAGDNLPNGKVATAVALADKLETLVGIWGIGLIPTGDKDPYALRRAALGILRMLMQYGLDVNELIQTAFDSFPKGLLNEKTPSETADFMQARLAVLLQNDYPQDIVAAVLAKQPRRLDDVVAKLQAVAAFKQLPEAAALAAANKRVQNLLKKADAALGEVNESLLQQDEEKALFAAAQGLQPKIAAAVAEGNFQTALSELASVKPQVDAFFDGVMVMAEDAAVKQNRLNLLNRLAEQMNAVADIALLGE</sequence>
<evidence type="ECO:0000255" key="1">
    <source>
        <dbReference type="HAMAP-Rule" id="MF_00255"/>
    </source>
</evidence>
<organism>
    <name type="scientific">Neisseria meningitidis serogroup C (strain 053442)</name>
    <dbReference type="NCBI Taxonomy" id="374833"/>
    <lineage>
        <taxon>Bacteria</taxon>
        <taxon>Pseudomonadati</taxon>
        <taxon>Pseudomonadota</taxon>
        <taxon>Betaproteobacteria</taxon>
        <taxon>Neisseriales</taxon>
        <taxon>Neisseriaceae</taxon>
        <taxon>Neisseria</taxon>
    </lineage>
</organism>
<protein>
    <recommendedName>
        <fullName evidence="1">Glycine--tRNA ligase beta subunit</fullName>
        <ecNumber evidence="1">6.1.1.14</ecNumber>
    </recommendedName>
    <alternativeName>
        <fullName evidence="1">Glycyl-tRNA synthetase beta subunit</fullName>
        <shortName evidence="1">GlyRS</shortName>
    </alternativeName>
</protein>
<comment type="catalytic activity">
    <reaction evidence="1">
        <text>tRNA(Gly) + glycine + ATP = glycyl-tRNA(Gly) + AMP + diphosphate</text>
        <dbReference type="Rhea" id="RHEA:16013"/>
        <dbReference type="Rhea" id="RHEA-COMP:9664"/>
        <dbReference type="Rhea" id="RHEA-COMP:9683"/>
        <dbReference type="ChEBI" id="CHEBI:30616"/>
        <dbReference type="ChEBI" id="CHEBI:33019"/>
        <dbReference type="ChEBI" id="CHEBI:57305"/>
        <dbReference type="ChEBI" id="CHEBI:78442"/>
        <dbReference type="ChEBI" id="CHEBI:78522"/>
        <dbReference type="ChEBI" id="CHEBI:456215"/>
        <dbReference type="EC" id="6.1.1.14"/>
    </reaction>
</comment>
<comment type="subunit">
    <text evidence="1">Tetramer of two alpha and two beta subunits.</text>
</comment>
<comment type="subcellular location">
    <subcellularLocation>
        <location evidence="1">Cytoplasm</location>
    </subcellularLocation>
</comment>
<comment type="similarity">
    <text evidence="1">Belongs to the class-II aminoacyl-tRNA synthetase family.</text>
</comment>
<reference key="1">
    <citation type="journal article" date="2008" name="Genomics">
        <title>Characterization of ST-4821 complex, a unique Neisseria meningitidis clone.</title>
        <authorList>
            <person name="Peng J."/>
            <person name="Yang L."/>
            <person name="Yang F."/>
            <person name="Yang J."/>
            <person name="Yan Y."/>
            <person name="Nie H."/>
            <person name="Zhang X."/>
            <person name="Xiong Z."/>
            <person name="Jiang Y."/>
            <person name="Cheng F."/>
            <person name="Xu X."/>
            <person name="Chen S."/>
            <person name="Sun L."/>
            <person name="Li W."/>
            <person name="Shen Y."/>
            <person name="Shao Z."/>
            <person name="Liang X."/>
            <person name="Xu J."/>
            <person name="Jin Q."/>
        </authorList>
    </citation>
    <scope>NUCLEOTIDE SEQUENCE [LARGE SCALE GENOMIC DNA]</scope>
    <source>
        <strain>053442</strain>
    </source>
</reference>
<feature type="chain" id="PRO_1000101308" description="Glycine--tRNA ligase beta subunit">
    <location>
        <begin position="1"/>
        <end position="687"/>
    </location>
</feature>
<name>SYGB_NEIM0</name>
<dbReference type="EC" id="6.1.1.14" evidence="1"/>
<dbReference type="EMBL" id="CP000381">
    <property type="protein sequence ID" value="ABX72496.1"/>
    <property type="molecule type" value="Genomic_DNA"/>
</dbReference>
<dbReference type="RefSeq" id="WP_012221229.1">
    <property type="nucleotide sequence ID" value="NC_010120.1"/>
</dbReference>
<dbReference type="SMR" id="A9M127"/>
<dbReference type="KEGG" id="nmn:NMCC_0288"/>
<dbReference type="HOGENOM" id="CLU_007220_2_2_4"/>
<dbReference type="Proteomes" id="UP000001177">
    <property type="component" value="Chromosome"/>
</dbReference>
<dbReference type="GO" id="GO:0005829">
    <property type="term" value="C:cytosol"/>
    <property type="evidence" value="ECO:0007669"/>
    <property type="project" value="TreeGrafter"/>
</dbReference>
<dbReference type="GO" id="GO:0004814">
    <property type="term" value="F:arginine-tRNA ligase activity"/>
    <property type="evidence" value="ECO:0007669"/>
    <property type="project" value="InterPro"/>
</dbReference>
<dbReference type="GO" id="GO:0005524">
    <property type="term" value="F:ATP binding"/>
    <property type="evidence" value="ECO:0007669"/>
    <property type="project" value="UniProtKB-UniRule"/>
</dbReference>
<dbReference type="GO" id="GO:0004820">
    <property type="term" value="F:glycine-tRNA ligase activity"/>
    <property type="evidence" value="ECO:0007669"/>
    <property type="project" value="UniProtKB-UniRule"/>
</dbReference>
<dbReference type="GO" id="GO:0006420">
    <property type="term" value="P:arginyl-tRNA aminoacylation"/>
    <property type="evidence" value="ECO:0007669"/>
    <property type="project" value="InterPro"/>
</dbReference>
<dbReference type="GO" id="GO:0006426">
    <property type="term" value="P:glycyl-tRNA aminoacylation"/>
    <property type="evidence" value="ECO:0007669"/>
    <property type="project" value="UniProtKB-UniRule"/>
</dbReference>
<dbReference type="HAMAP" id="MF_00255">
    <property type="entry name" value="Gly_tRNA_synth_beta"/>
    <property type="match status" value="1"/>
</dbReference>
<dbReference type="InterPro" id="IPR008909">
    <property type="entry name" value="DALR_anticod-bd"/>
</dbReference>
<dbReference type="InterPro" id="IPR015944">
    <property type="entry name" value="Gly-tRNA-synth_bsu"/>
</dbReference>
<dbReference type="InterPro" id="IPR006194">
    <property type="entry name" value="Gly-tRNA-synth_heterodimer"/>
</dbReference>
<dbReference type="NCBIfam" id="TIGR00211">
    <property type="entry name" value="glyS"/>
    <property type="match status" value="1"/>
</dbReference>
<dbReference type="PANTHER" id="PTHR30075:SF2">
    <property type="entry name" value="GLYCINE--TRNA LIGASE, CHLOROPLASTIC_MITOCHONDRIAL 2"/>
    <property type="match status" value="1"/>
</dbReference>
<dbReference type="PANTHER" id="PTHR30075">
    <property type="entry name" value="GLYCYL-TRNA SYNTHETASE"/>
    <property type="match status" value="1"/>
</dbReference>
<dbReference type="Pfam" id="PF05746">
    <property type="entry name" value="DALR_1"/>
    <property type="match status" value="1"/>
</dbReference>
<dbReference type="Pfam" id="PF02092">
    <property type="entry name" value="tRNA_synt_2f"/>
    <property type="match status" value="1"/>
</dbReference>
<dbReference type="PRINTS" id="PR01045">
    <property type="entry name" value="TRNASYNTHGB"/>
</dbReference>
<dbReference type="SUPFAM" id="SSF109604">
    <property type="entry name" value="HD-domain/PDEase-like"/>
    <property type="match status" value="1"/>
</dbReference>
<dbReference type="PROSITE" id="PS50861">
    <property type="entry name" value="AA_TRNA_LIGASE_II_GLYAB"/>
    <property type="match status" value="1"/>
</dbReference>
<accession>A9M127</accession>
<keyword id="KW-0030">Aminoacyl-tRNA synthetase</keyword>
<keyword id="KW-0067">ATP-binding</keyword>
<keyword id="KW-0963">Cytoplasm</keyword>
<keyword id="KW-0436">Ligase</keyword>
<keyword id="KW-0547">Nucleotide-binding</keyword>
<keyword id="KW-0648">Protein biosynthesis</keyword>
<gene>
    <name evidence="1" type="primary">glyS</name>
    <name type="ordered locus">NMCC_0288</name>
</gene>
<proteinExistence type="inferred from homology"/>